<name>GYRA_PSEAE</name>
<comment type="function">
    <text evidence="1">A type II topoisomerase that negatively supercoils closed circular double-stranded (ds) DNA in an ATP-dependent manner to modulate DNA topology and maintain chromosomes in an underwound state. Negative supercoiling favors strand separation, and DNA replication, transcription, recombination and repair, all of which involve strand separation. Also able to catalyze the interconversion of other topological isomers of dsDNA rings, including catenanes and knotted rings. Type II topoisomerases break and join 2 DNA strands simultaneously in an ATP-dependent manner.</text>
</comment>
<comment type="catalytic activity">
    <reaction evidence="1">
        <text>ATP-dependent breakage, passage and rejoining of double-stranded DNA.</text>
        <dbReference type="EC" id="5.6.2.2"/>
    </reaction>
</comment>
<comment type="subunit">
    <text evidence="1">Heterotetramer, composed of two GyrA and two GyrB chains. In the heterotetramer, GyrA contains the active site tyrosine that forms a transient covalent intermediate with DNA, while GyrB binds cofactors and catalyzes ATP hydrolysis.</text>
</comment>
<comment type="subcellular location">
    <subcellularLocation>
        <location evidence="1">Cytoplasm</location>
    </subcellularLocation>
</comment>
<comment type="miscellaneous">
    <text evidence="1">Few gyrases are as efficient as E.coli at forming negative supercoils. Not all organisms have 2 type II topoisomerases; in organisms with a single type II topoisomerase this enzyme also has to decatenate newly replicated chromosomes.</text>
</comment>
<comment type="similarity">
    <text evidence="1">Belongs to the type II topoisomerase GyrA/ParC subunit family.</text>
</comment>
<dbReference type="EC" id="5.6.2.2" evidence="1"/>
<dbReference type="EMBL" id="L29417">
    <property type="protein sequence ID" value="AAA68625.1"/>
    <property type="molecule type" value="Genomic_DNA"/>
</dbReference>
<dbReference type="EMBL" id="AE004091">
    <property type="protein sequence ID" value="AAG06556.1"/>
    <property type="molecule type" value="Genomic_DNA"/>
</dbReference>
<dbReference type="PIR" id="H83248">
    <property type="entry name" value="H83248"/>
</dbReference>
<dbReference type="RefSeq" id="NP_251858.1">
    <property type="nucleotide sequence ID" value="NC_002516.2"/>
</dbReference>
<dbReference type="RefSeq" id="WP_003091448.1">
    <property type="nucleotide sequence ID" value="NZ_QZGE01000023.1"/>
</dbReference>
<dbReference type="SMR" id="P48372"/>
<dbReference type="FunCoup" id="P48372">
    <property type="interactions" value="503"/>
</dbReference>
<dbReference type="STRING" id="208964.PA3168"/>
<dbReference type="ChEMBL" id="CHEMBL3390828"/>
<dbReference type="PaxDb" id="208964-PA3168"/>
<dbReference type="GeneID" id="882800"/>
<dbReference type="KEGG" id="pae:PA3168"/>
<dbReference type="PATRIC" id="fig|208964.12.peg.3311"/>
<dbReference type="PseudoCAP" id="PA3168"/>
<dbReference type="HOGENOM" id="CLU_002977_6_1_6"/>
<dbReference type="InParanoid" id="P48372"/>
<dbReference type="OrthoDB" id="9806486at2"/>
<dbReference type="PhylomeDB" id="P48372"/>
<dbReference type="BioCyc" id="PAER208964:G1FZ6-3228-MONOMER"/>
<dbReference type="Proteomes" id="UP000002438">
    <property type="component" value="Chromosome"/>
</dbReference>
<dbReference type="GO" id="GO:0005694">
    <property type="term" value="C:chromosome"/>
    <property type="evidence" value="ECO:0007669"/>
    <property type="project" value="InterPro"/>
</dbReference>
<dbReference type="GO" id="GO:0005737">
    <property type="term" value="C:cytoplasm"/>
    <property type="evidence" value="ECO:0000318"/>
    <property type="project" value="GO_Central"/>
</dbReference>
<dbReference type="GO" id="GO:0009330">
    <property type="term" value="C:DNA topoisomerase type II (double strand cut, ATP-hydrolyzing) complex"/>
    <property type="evidence" value="ECO:0000318"/>
    <property type="project" value="GO_Central"/>
</dbReference>
<dbReference type="GO" id="GO:0005524">
    <property type="term" value="F:ATP binding"/>
    <property type="evidence" value="ECO:0000318"/>
    <property type="project" value="GO_Central"/>
</dbReference>
<dbReference type="GO" id="GO:0003677">
    <property type="term" value="F:DNA binding"/>
    <property type="evidence" value="ECO:0000318"/>
    <property type="project" value="GO_Central"/>
</dbReference>
<dbReference type="GO" id="GO:0034335">
    <property type="term" value="F:DNA negative supercoiling activity"/>
    <property type="evidence" value="ECO:0007669"/>
    <property type="project" value="UniProtKB-ARBA"/>
</dbReference>
<dbReference type="GO" id="GO:0006265">
    <property type="term" value="P:DNA topological change"/>
    <property type="evidence" value="ECO:0000318"/>
    <property type="project" value="GO_Central"/>
</dbReference>
<dbReference type="GO" id="GO:0006261">
    <property type="term" value="P:DNA-templated DNA replication"/>
    <property type="evidence" value="ECO:0007669"/>
    <property type="project" value="UniProtKB-UniRule"/>
</dbReference>
<dbReference type="CDD" id="cd00187">
    <property type="entry name" value="TOP4c"/>
    <property type="match status" value="1"/>
</dbReference>
<dbReference type="FunFam" id="3.30.1360.40:FF:000002">
    <property type="entry name" value="DNA gyrase subunit A"/>
    <property type="match status" value="1"/>
</dbReference>
<dbReference type="FunFam" id="3.90.199.10:FF:000001">
    <property type="entry name" value="DNA gyrase subunit A"/>
    <property type="match status" value="1"/>
</dbReference>
<dbReference type="Gene3D" id="3.30.1360.40">
    <property type="match status" value="1"/>
</dbReference>
<dbReference type="Gene3D" id="2.120.10.90">
    <property type="entry name" value="DNA gyrase/topoisomerase IV, subunit A, C-terminal"/>
    <property type="match status" value="1"/>
</dbReference>
<dbReference type="Gene3D" id="3.90.199.10">
    <property type="entry name" value="Topoisomerase II, domain 5"/>
    <property type="match status" value="1"/>
</dbReference>
<dbReference type="Gene3D" id="1.10.268.10">
    <property type="entry name" value="Topoisomerase, domain 3"/>
    <property type="match status" value="1"/>
</dbReference>
<dbReference type="HAMAP" id="MF_01897">
    <property type="entry name" value="GyrA"/>
    <property type="match status" value="1"/>
</dbReference>
<dbReference type="InterPro" id="IPR005743">
    <property type="entry name" value="GyrA"/>
</dbReference>
<dbReference type="InterPro" id="IPR006691">
    <property type="entry name" value="GyrA/parC_rep"/>
</dbReference>
<dbReference type="InterPro" id="IPR035516">
    <property type="entry name" value="Gyrase/topoIV_suA_C"/>
</dbReference>
<dbReference type="InterPro" id="IPR013760">
    <property type="entry name" value="Topo_IIA-like_dom_sf"/>
</dbReference>
<dbReference type="InterPro" id="IPR013758">
    <property type="entry name" value="Topo_IIA_A/C_ab"/>
</dbReference>
<dbReference type="InterPro" id="IPR013757">
    <property type="entry name" value="Topo_IIA_A_a_sf"/>
</dbReference>
<dbReference type="InterPro" id="IPR002205">
    <property type="entry name" value="Topo_IIA_dom_A"/>
</dbReference>
<dbReference type="InterPro" id="IPR050220">
    <property type="entry name" value="Type_II_DNA_Topoisomerases"/>
</dbReference>
<dbReference type="NCBIfam" id="TIGR01063">
    <property type="entry name" value="gyrA"/>
    <property type="match status" value="1"/>
</dbReference>
<dbReference type="NCBIfam" id="NF004043">
    <property type="entry name" value="PRK05560.1"/>
    <property type="match status" value="1"/>
</dbReference>
<dbReference type="NCBIfam" id="NF004044">
    <property type="entry name" value="PRK05561.1"/>
    <property type="match status" value="1"/>
</dbReference>
<dbReference type="PANTHER" id="PTHR43493:SF5">
    <property type="entry name" value="DNA GYRASE SUBUNIT A, CHLOROPLASTIC_MITOCHONDRIAL"/>
    <property type="match status" value="1"/>
</dbReference>
<dbReference type="PANTHER" id="PTHR43493">
    <property type="entry name" value="DNA GYRASE/TOPOISOMERASE SUBUNIT A"/>
    <property type="match status" value="1"/>
</dbReference>
<dbReference type="Pfam" id="PF03989">
    <property type="entry name" value="DNA_gyraseA_C"/>
    <property type="match status" value="6"/>
</dbReference>
<dbReference type="Pfam" id="PF00521">
    <property type="entry name" value="DNA_topoisoIV"/>
    <property type="match status" value="1"/>
</dbReference>
<dbReference type="SMART" id="SM00434">
    <property type="entry name" value="TOP4c"/>
    <property type="match status" value="1"/>
</dbReference>
<dbReference type="SUPFAM" id="SSF101904">
    <property type="entry name" value="GyrA/ParC C-terminal domain-like"/>
    <property type="match status" value="1"/>
</dbReference>
<dbReference type="SUPFAM" id="SSF56719">
    <property type="entry name" value="Type II DNA topoisomerase"/>
    <property type="match status" value="1"/>
</dbReference>
<dbReference type="PROSITE" id="PS52040">
    <property type="entry name" value="TOPO_IIA"/>
    <property type="match status" value="1"/>
</dbReference>
<accession>P48372</accession>
<sequence length="923" mass="101135">MGELAKEILPVNIEDELKQSYLDYAMSVIVGRALPDARDGLKPVHRRVLYAMSELGNDWNKPYKKSARVVGDVIGKYHPHGDTAVYDTIVRMAQPFSLRYMLVDGQGNFGSVDGDNAAAMRYTEVRMAKLAHELLADLEKETVDWVPNYDGTEQIPAVMPTKIPNLLVNGSSGIAVGMATNIPPHNLGEVIDGCLALMDNPDLTVDELMQYIPGPDFPTAGIINGRAGIIEAYRTGRGRIYIRARAVVEEMEKGGGREQIIITELPYQLNKARLIEKIAELVKEKKIEGISELRDESDKDGMRVVIELRRGEVGEVVLNNLYAQTQLQSVFGINVVALVDGQPRTLNLKDMLEVFVRHRREVVTRRTVYELRKARERGHILEGQAVALSNIDPVIELIKSSPTPAEAKERLIATAWESSAVEAMVERAGADACRPEDLDPQYGLRDGKYYLSPEQAQAILELRLHRLTGLEHEKLLSEYQEILNLIGELIRILTNPARLMEVIREELEAVKAEFGDARRTEIVASQVDLTIADLITEEDRVVTISHGGYAKSQPLAAYQAQRRGGKGKSATGMKDEDYIEHLLVANSHATLLLFSSKGKVYWLRTFEIPEASRTARGRPLVNLLPLDEGERITAMLQIDLEALQQNGGADDDLDEAEGAVLEGEVVEAAEVEEVEGETAELVAEPTGAYIFMATAFGTVKKTPLVQFSRPRSSGLIALKLEEGDTLIAAAITDGAKEVMLFSSAGKVIRFAESVVRIMGRNARGVRGMRLGKGQQLISMLIPESGAQILTASERGFGKRTPLSKFPRRGRGGQGVIAMVTNERNGALIAAVQVQEGEEIMLISDQGTLVRTRVDEVSLSGRNTQGVTLIKLASDEVLVGLERVQEPSGGDDEDLPEGEEAAESLGESAESESEPAAEAEGNEE</sequence>
<gene>
    <name evidence="1" type="primary">gyrA</name>
    <name type="ordered locus">PA3168</name>
</gene>
<protein>
    <recommendedName>
        <fullName evidence="1">DNA gyrase subunit A</fullName>
        <ecNumber evidence="1">5.6.2.2</ecNumber>
    </recommendedName>
</protein>
<organism>
    <name type="scientific">Pseudomonas aeruginosa (strain ATCC 15692 / DSM 22644 / CIP 104116 / JCM 14847 / LMG 12228 / 1C / PRS 101 / PAO1)</name>
    <dbReference type="NCBI Taxonomy" id="208964"/>
    <lineage>
        <taxon>Bacteria</taxon>
        <taxon>Pseudomonadati</taxon>
        <taxon>Pseudomonadota</taxon>
        <taxon>Gammaproteobacteria</taxon>
        <taxon>Pseudomonadales</taxon>
        <taxon>Pseudomonadaceae</taxon>
        <taxon>Pseudomonas</taxon>
    </lineage>
</organism>
<keyword id="KW-0067">ATP-binding</keyword>
<keyword id="KW-0963">Cytoplasm</keyword>
<keyword id="KW-0238">DNA-binding</keyword>
<keyword id="KW-0413">Isomerase</keyword>
<keyword id="KW-0547">Nucleotide-binding</keyword>
<keyword id="KW-1185">Reference proteome</keyword>
<keyword id="KW-0799">Topoisomerase</keyword>
<feature type="chain" id="PRO_0000145245" description="DNA gyrase subunit A">
    <location>
        <begin position="1"/>
        <end position="923"/>
    </location>
</feature>
<feature type="domain" description="Topo IIA-type catalytic" evidence="2">
    <location>
        <begin position="34"/>
        <end position="534"/>
    </location>
</feature>
<feature type="region of interest" description="Disordered" evidence="3">
    <location>
        <begin position="881"/>
        <end position="923"/>
    </location>
</feature>
<feature type="short sequence motif" description="GyrA-box" evidence="1">
    <location>
        <begin position="561"/>
        <end position="567"/>
    </location>
</feature>
<feature type="compositionally biased region" description="Acidic residues" evidence="3">
    <location>
        <begin position="888"/>
        <end position="901"/>
    </location>
</feature>
<feature type="compositionally biased region" description="Acidic residues" evidence="3">
    <location>
        <begin position="908"/>
        <end position="923"/>
    </location>
</feature>
<feature type="active site" description="O-(5'-phospho-DNA)-tyrosine intermediate" evidence="1">
    <location>
        <position position="122"/>
    </location>
</feature>
<proteinExistence type="inferred from homology"/>
<reference key="1">
    <citation type="journal article" date="1994" name="Antimicrob. Agents Chemother.">
        <title>Cloning and nucleotide sequence of Pseudomonas aeruginosa DNA gyrase gyrA gene from strain PAO1 and quinolone-resistant clinical isolates.</title>
        <authorList>
            <person name="Kureishi A."/>
            <person name="Diver J.M."/>
            <person name="Beckthold B."/>
            <person name="Schollaardt T."/>
            <person name="Bryan L.E."/>
        </authorList>
    </citation>
    <scope>NUCLEOTIDE SEQUENCE [GENOMIC DNA]</scope>
    <source>
        <strain>ATCC 15692 / DSM 22644 / CIP 104116 / JCM 14847 / LMG 12228 / 1C / PRS 101 / PAO1</strain>
    </source>
</reference>
<reference key="2">
    <citation type="journal article" date="2000" name="Nature">
        <title>Complete genome sequence of Pseudomonas aeruginosa PAO1, an opportunistic pathogen.</title>
        <authorList>
            <person name="Stover C.K."/>
            <person name="Pham X.-Q.T."/>
            <person name="Erwin A.L."/>
            <person name="Mizoguchi S.D."/>
            <person name="Warrener P."/>
            <person name="Hickey M.J."/>
            <person name="Brinkman F.S.L."/>
            <person name="Hufnagle W.O."/>
            <person name="Kowalik D.J."/>
            <person name="Lagrou M."/>
            <person name="Garber R.L."/>
            <person name="Goltry L."/>
            <person name="Tolentino E."/>
            <person name="Westbrock-Wadman S."/>
            <person name="Yuan Y."/>
            <person name="Brody L.L."/>
            <person name="Coulter S.N."/>
            <person name="Folger K.R."/>
            <person name="Kas A."/>
            <person name="Larbig K."/>
            <person name="Lim R.M."/>
            <person name="Smith K.A."/>
            <person name="Spencer D.H."/>
            <person name="Wong G.K.-S."/>
            <person name="Wu Z."/>
            <person name="Paulsen I.T."/>
            <person name="Reizer J."/>
            <person name="Saier M.H. Jr."/>
            <person name="Hancock R.E.W."/>
            <person name="Lory S."/>
            <person name="Olson M.V."/>
        </authorList>
    </citation>
    <scope>NUCLEOTIDE SEQUENCE [LARGE SCALE GENOMIC DNA]</scope>
    <source>
        <strain>ATCC 15692 / DSM 22644 / CIP 104116 / JCM 14847 / LMG 12228 / 1C / PRS 101 / PAO1</strain>
    </source>
</reference>
<evidence type="ECO:0000255" key="1">
    <source>
        <dbReference type="HAMAP-Rule" id="MF_01897"/>
    </source>
</evidence>
<evidence type="ECO:0000255" key="2">
    <source>
        <dbReference type="PROSITE-ProRule" id="PRU01384"/>
    </source>
</evidence>
<evidence type="ECO:0000256" key="3">
    <source>
        <dbReference type="SAM" id="MobiDB-lite"/>
    </source>
</evidence>